<proteinExistence type="evidence at protein level"/>
<name>KAIB_NOSS1</name>
<organism>
    <name type="scientific">Nostoc sp. (strain PCC 7120 / SAG 25.82 / UTEX 2576)</name>
    <dbReference type="NCBI Taxonomy" id="103690"/>
    <lineage>
        <taxon>Bacteria</taxon>
        <taxon>Bacillati</taxon>
        <taxon>Cyanobacteriota</taxon>
        <taxon>Cyanophyceae</taxon>
        <taxon>Nostocales</taxon>
        <taxon>Nostocaceae</taxon>
        <taxon>Nostoc</taxon>
    </lineage>
</organism>
<protein>
    <recommendedName>
        <fullName evidence="1">Circadian clock oscillator protein KaiB</fullName>
    </recommendedName>
</protein>
<sequence>MNKARKTYVLKLYVAGNTPNSVRALKTLKNILEQEFQGIYALKVIDVLKNPQLAEEDKILATPTLSKILPPPVRKIIGDLSDRERVLIGLDLLYEELTEEDWEAQSNL</sequence>
<dbReference type="EMBL" id="AB071284">
    <property type="protein sequence ID" value="BAB85868.1"/>
    <property type="molecule type" value="Genomic_DNA"/>
</dbReference>
<dbReference type="EMBL" id="BA000019">
    <property type="protein sequence ID" value="BAB74584.1"/>
    <property type="molecule type" value="Genomic_DNA"/>
</dbReference>
<dbReference type="PIR" id="AF2166">
    <property type="entry name" value="AF2166"/>
</dbReference>
<dbReference type="RefSeq" id="WP_010997036.1">
    <property type="nucleotide sequence ID" value="NZ_RSCN01000003.1"/>
</dbReference>
<dbReference type="PDB" id="1R5P">
    <property type="method" value="X-ray"/>
    <property type="resolution" value="2.20 A"/>
    <property type="chains" value="A/B=1-108"/>
</dbReference>
<dbReference type="PDBsum" id="1R5P"/>
<dbReference type="SMR" id="Q8YT41"/>
<dbReference type="STRING" id="103690.gene:10494919"/>
<dbReference type="KEGG" id="ana:alr2885"/>
<dbReference type="eggNOG" id="COG4251">
    <property type="taxonomic scope" value="Bacteria"/>
</dbReference>
<dbReference type="OrthoDB" id="5458519at2"/>
<dbReference type="EvolutionaryTrace" id="Q8YT41"/>
<dbReference type="Proteomes" id="UP000002483">
    <property type="component" value="Chromosome"/>
</dbReference>
<dbReference type="GO" id="GO:0007623">
    <property type="term" value="P:circadian rhythm"/>
    <property type="evidence" value="ECO:0007669"/>
    <property type="project" value="UniProtKB-UniRule"/>
</dbReference>
<dbReference type="CDD" id="cd02978">
    <property type="entry name" value="KaiB_like"/>
    <property type="match status" value="1"/>
</dbReference>
<dbReference type="FunFam" id="3.40.30.10:FF:000180">
    <property type="entry name" value="Circadian clock protein KaiB"/>
    <property type="match status" value="1"/>
</dbReference>
<dbReference type="Gene3D" id="3.40.30.10">
    <property type="entry name" value="Glutaredoxin"/>
    <property type="match status" value="1"/>
</dbReference>
<dbReference type="HAMAP" id="MF_01835">
    <property type="entry name" value="KaiB"/>
    <property type="match status" value="1"/>
</dbReference>
<dbReference type="InterPro" id="IPR013474">
    <property type="entry name" value="Circ_KaiB"/>
</dbReference>
<dbReference type="InterPro" id="IPR039022">
    <property type="entry name" value="KaiB-like"/>
</dbReference>
<dbReference type="InterPro" id="IPR011649">
    <property type="entry name" value="KaiB_domain"/>
</dbReference>
<dbReference type="InterPro" id="IPR036249">
    <property type="entry name" value="Thioredoxin-like_sf"/>
</dbReference>
<dbReference type="NCBIfam" id="TIGR02654">
    <property type="entry name" value="circ_KaiB"/>
    <property type="match status" value="1"/>
</dbReference>
<dbReference type="NCBIfam" id="NF006798">
    <property type="entry name" value="PRK09301.1"/>
    <property type="match status" value="1"/>
</dbReference>
<dbReference type="PANTHER" id="PTHR41709:SF2">
    <property type="entry name" value="CIRCADIAN CLOCK PROTEIN KAIB2"/>
    <property type="match status" value="1"/>
</dbReference>
<dbReference type="PANTHER" id="PTHR41709">
    <property type="entry name" value="KAIB-LIKE PROTEIN 1"/>
    <property type="match status" value="1"/>
</dbReference>
<dbReference type="Pfam" id="PF07689">
    <property type="entry name" value="KaiB"/>
    <property type="match status" value="1"/>
</dbReference>
<dbReference type="SMART" id="SM01248">
    <property type="entry name" value="KaiB"/>
    <property type="match status" value="1"/>
</dbReference>
<dbReference type="SUPFAM" id="SSF52833">
    <property type="entry name" value="Thioredoxin-like"/>
    <property type="match status" value="1"/>
</dbReference>
<gene>
    <name evidence="1 3" type="primary">kaiB</name>
    <name type="ordered locus">alr2885</name>
</gene>
<reference evidence="6" key="1">
    <citation type="submission" date="2001-09" db="EMBL/GenBank/DDBJ databases">
        <title>Circadian clock gene in Anabaena sp. strain PCC 7120.</title>
        <authorList>
            <person name="Uzumaki T."/>
            <person name="Nakahira Y."/>
            <person name="Hayashi F."/>
            <person name="Fujita M."/>
            <person name="Wolk C.P."/>
            <person name="Kondo T."/>
            <person name="Ishiura M."/>
        </authorList>
    </citation>
    <scope>NUCLEOTIDE SEQUENCE [GENOMIC DNA]</scope>
    <source>
        <strain>PCC 7120 / SAG 25.82 / UTEX 2576</strain>
    </source>
</reference>
<reference evidence="5" key="2">
    <citation type="journal article" date="2001" name="DNA Res.">
        <title>Complete genomic sequence of the filamentous nitrogen-fixing cyanobacterium Anabaena sp. strain PCC 7120.</title>
        <authorList>
            <person name="Kaneko T."/>
            <person name="Nakamura Y."/>
            <person name="Wolk C.P."/>
            <person name="Kuritz T."/>
            <person name="Sasamoto S."/>
            <person name="Watanabe A."/>
            <person name="Iriguchi M."/>
            <person name="Ishikawa A."/>
            <person name="Kawashima K."/>
            <person name="Kimura T."/>
            <person name="Kishida Y."/>
            <person name="Kohara M."/>
            <person name="Matsumoto M."/>
            <person name="Matsuno A."/>
            <person name="Muraki A."/>
            <person name="Nakazaki N."/>
            <person name="Shimpo S."/>
            <person name="Sugimoto M."/>
            <person name="Takazawa M."/>
            <person name="Yamada M."/>
            <person name="Yasuda M."/>
            <person name="Tabata S."/>
        </authorList>
    </citation>
    <scope>NUCLEOTIDE SEQUENCE [LARGE SCALE GENOMIC DNA]</scope>
    <source>
        <strain>PCC 7120 / SAG 25.82 / UTEX 2576</strain>
    </source>
</reference>
<reference evidence="7" key="3">
    <citation type="journal article" date="2004" name="EMBO J.">
        <title>Anabaena circadian clock proteins KaiA and KaiB reveal a potential common binding site to their partner KaiC.</title>
        <authorList>
            <person name="Garces R.G."/>
            <person name="Wu N."/>
            <person name="Gillon W."/>
            <person name="Pai E.F."/>
        </authorList>
    </citation>
    <scope>X-RAY CRYSTALLOGRAPHY (2.2 ANGSTROMS)</scope>
    <scope>HOMODIMERIZATION</scope>
    <scope>INTERACTION WITH KAIC</scope>
    <scope>MUTAGENESIS OF ARG-23</scope>
</reference>
<keyword id="KW-0002">3D-structure</keyword>
<keyword id="KW-0090">Biological rhythms</keyword>
<keyword id="KW-1185">Reference proteome</keyword>
<accession>Q8YT41</accession>
<evidence type="ECO:0000255" key="1">
    <source>
        <dbReference type="HAMAP-Rule" id="MF_01835"/>
    </source>
</evidence>
<evidence type="ECO:0000269" key="2">
    <source>
    </source>
</evidence>
<evidence type="ECO:0000303" key="3">
    <source ref="1"/>
</evidence>
<evidence type="ECO:0000305" key="4"/>
<evidence type="ECO:0000312" key="5">
    <source>
        <dbReference type="EMBL" id="BAB74584.1"/>
    </source>
</evidence>
<evidence type="ECO:0000312" key="6">
    <source>
        <dbReference type="EMBL" id="BAB85868.1"/>
    </source>
</evidence>
<evidence type="ECO:0007744" key="7">
    <source>
        <dbReference type="PDB" id="1R5P"/>
    </source>
</evidence>
<evidence type="ECO:0007829" key="8">
    <source>
        <dbReference type="PDB" id="1R5P"/>
    </source>
</evidence>
<feature type="chain" id="PRO_0000217761" description="Circadian clock oscillator protein KaiB">
    <location>
        <begin position="1"/>
        <end position="108"/>
    </location>
</feature>
<feature type="mutagenesis site" description="Induces a strong decrease the interaction with KaiC." evidence="2">
    <original>R</original>
    <variation>A</variation>
    <location>
        <position position="23"/>
    </location>
</feature>
<feature type="strand" evidence="8">
    <location>
        <begin position="8"/>
        <end position="16"/>
    </location>
</feature>
<feature type="helix" evidence="8">
    <location>
        <begin position="19"/>
        <end position="36"/>
    </location>
</feature>
<feature type="strand" evidence="8">
    <location>
        <begin position="39"/>
        <end position="46"/>
    </location>
</feature>
<feature type="turn" evidence="8">
    <location>
        <begin position="47"/>
        <end position="49"/>
    </location>
</feature>
<feature type="helix" evidence="8">
    <location>
        <begin position="62"/>
        <end position="65"/>
    </location>
</feature>
<feature type="helix" evidence="8">
    <location>
        <begin position="66"/>
        <end position="68"/>
    </location>
</feature>
<feature type="helix" evidence="8">
    <location>
        <begin position="71"/>
        <end position="82"/>
    </location>
</feature>
<feature type="strand" evidence="8">
    <location>
        <begin position="87"/>
        <end position="94"/>
    </location>
</feature>
<comment type="function">
    <text evidence="1">Key component of the KaiABC oscillator complex, which constitutes the main circadian regulator in cyanobacteria. Complex composition changes during the circadian cycle to control KaiC phosphorylation. KaiA stimulates KaiC autophosphorylation, while KaiB sequesters KaiA, leading to KaiC autodephosphorylation. Phospho-Ser-431 KaiC accumulation triggers binding of KaiB to form the KaiB(6):KaiC(6) complex, leading to changes in output regulators CikA and SasA. KaiB switches to a thioredoxin-like fold (KaiB(fs)) when bound to KaiC. KaiB(6):KaiC(6) formation exposes a site for KaiA binding that sequesters KaiA from KaiC, making the KaiC(6):KaiB(6):KaiA(12) complex that results in KaiC autodephosphorylation.</text>
</comment>
<comment type="function">
    <text evidence="1">A metamorphic protein which reversibly switches between an inactive tetrameric fold and a rare, thioredoxin-like monomeric fold (KaiB(fs)). KaiB(fs) binds phospho-KaiC, KaiA and CikA. KaiA and CikA compete for binding to KaiB(fs), and KaiB(fs) and SasA compete for binding to KaiC, thus the clock oscillator and output signal pathway are tightly coupled.</text>
</comment>
<comment type="subunit">
    <text evidence="1 2">Homodimer, interacts with KaiC (PubMed:15071498). The KaiABC complex composition changes during the circadian cycle to control KaiC phosphorylation. Complexes KaiC(6), KaiA(2-4):KaiC(6), KaiB(6):KaiC(6) and KaiC(6):KaiB(6):KaiA(12) are among the most important forms, many form cooperatively. Undergoes a major conformational rearrangment; in the free state forms homotetramers as a dimer of dimers. When bound to the CI domain of KaiC switches to a monomeric thioredoxin-fold (KaiB(fs)). KaiB(fs) binds CikA, leading it to dephosphorylate phospho-RpaA.</text>
</comment>
<comment type="domain">
    <text evidence="1">Has 2 forms, fold switches to a thioredoxin-like fold (KaiB(fs)) when bound to KaiC.</text>
</comment>
<comment type="similarity">
    <text evidence="1 4">Belongs to the KaiB family.</text>
</comment>